<gene>
    <name type="ordered locus">aq_1964</name>
</gene>
<proteinExistence type="evidence at protein level"/>
<dbReference type="EC" id="3.4.24.-"/>
<dbReference type="EMBL" id="AE000657">
    <property type="protein sequence ID" value="AAC07743.1"/>
    <property type="molecule type" value="Genomic_DNA"/>
</dbReference>
<dbReference type="PIR" id="D70468">
    <property type="entry name" value="D70468"/>
</dbReference>
<dbReference type="RefSeq" id="NP_214345.1">
    <property type="nucleotide sequence ID" value="NC_000918.1"/>
</dbReference>
<dbReference type="RefSeq" id="WP_010881281.1">
    <property type="nucleotide sequence ID" value="NC_000918.1"/>
</dbReference>
<dbReference type="PDB" id="3WKL">
    <property type="method" value="X-ray"/>
    <property type="resolution" value="2.80 A"/>
    <property type="chains" value="A=113-292"/>
</dbReference>
<dbReference type="PDB" id="3WKM">
    <property type="method" value="X-ray"/>
    <property type="resolution" value="2.20 A"/>
    <property type="chains" value="A/B=115-292"/>
</dbReference>
<dbReference type="PDB" id="6AKQ">
    <property type="method" value="X-ray"/>
    <property type="resolution" value="1.90 A"/>
    <property type="chains" value="A=115-292"/>
</dbReference>
<dbReference type="PDB" id="6AL0">
    <property type="method" value="X-ray"/>
    <property type="resolution" value="2.60 A"/>
    <property type="chains" value="A=115-292"/>
</dbReference>
<dbReference type="PDB" id="6AL1">
    <property type="method" value="X-ray"/>
    <property type="resolution" value="3.20 A"/>
    <property type="chains" value="A=115-292"/>
</dbReference>
<dbReference type="PDB" id="6ICC">
    <property type="method" value="X-ray"/>
    <property type="resolution" value="2.00 A"/>
    <property type="chains" value="A=115-292"/>
</dbReference>
<dbReference type="PDB" id="6ICF">
    <property type="method" value="X-ray"/>
    <property type="resolution" value="4.00 A"/>
    <property type="chains" value="A=115-292"/>
</dbReference>
<dbReference type="PDB" id="7CQD">
    <property type="method" value="X-ray"/>
    <property type="resolution" value="3.20 A"/>
    <property type="chains" value="A/B=115-292"/>
</dbReference>
<dbReference type="PDBsum" id="3WKL"/>
<dbReference type="PDBsum" id="3WKM"/>
<dbReference type="PDBsum" id="6AKQ"/>
<dbReference type="PDBsum" id="6AL0"/>
<dbReference type="PDBsum" id="6AL1"/>
<dbReference type="PDBsum" id="6ICC"/>
<dbReference type="PDBsum" id="6ICF"/>
<dbReference type="PDBsum" id="7CQD"/>
<dbReference type="EMDB" id="EMD-61213"/>
<dbReference type="EMDB" id="EMD-61214"/>
<dbReference type="SMR" id="O67776"/>
<dbReference type="FunCoup" id="O67776">
    <property type="interactions" value="366"/>
</dbReference>
<dbReference type="STRING" id="224324.aq_1964"/>
<dbReference type="ABCD" id="O67776">
    <property type="antibodies" value="1 sequenced antibody"/>
</dbReference>
<dbReference type="EnsemblBacteria" id="AAC07743">
    <property type="protein sequence ID" value="AAC07743"/>
    <property type="gene ID" value="aq_1964"/>
</dbReference>
<dbReference type="KEGG" id="aae:aq_1964"/>
<dbReference type="PATRIC" id="fig|224324.8.peg.1515"/>
<dbReference type="eggNOG" id="COG0750">
    <property type="taxonomic scope" value="Bacteria"/>
</dbReference>
<dbReference type="HOGENOM" id="CLU_025778_0_2_0"/>
<dbReference type="InParanoid" id="O67776"/>
<dbReference type="OrthoDB" id="9782003at2"/>
<dbReference type="EvolutionaryTrace" id="O67776"/>
<dbReference type="Proteomes" id="UP000000798">
    <property type="component" value="Chromosome"/>
</dbReference>
<dbReference type="GO" id="GO:0005886">
    <property type="term" value="C:plasma membrane"/>
    <property type="evidence" value="ECO:0007669"/>
    <property type="project" value="UniProtKB-SubCell"/>
</dbReference>
<dbReference type="GO" id="GO:0046872">
    <property type="term" value="F:metal ion binding"/>
    <property type="evidence" value="ECO:0007669"/>
    <property type="project" value="UniProtKB-KW"/>
</dbReference>
<dbReference type="GO" id="GO:0004222">
    <property type="term" value="F:metalloendopeptidase activity"/>
    <property type="evidence" value="ECO:0007669"/>
    <property type="project" value="InterPro"/>
</dbReference>
<dbReference type="GO" id="GO:0006508">
    <property type="term" value="P:proteolysis"/>
    <property type="evidence" value="ECO:0007669"/>
    <property type="project" value="UniProtKB-KW"/>
</dbReference>
<dbReference type="CDD" id="cd23081">
    <property type="entry name" value="cpPDZ_EcRseP-like"/>
    <property type="match status" value="2"/>
</dbReference>
<dbReference type="CDD" id="cd06163">
    <property type="entry name" value="S2P-M50_PDZ_RseP-like"/>
    <property type="match status" value="1"/>
</dbReference>
<dbReference type="Gene3D" id="2.30.42.10">
    <property type="match status" value="2"/>
</dbReference>
<dbReference type="InterPro" id="IPR001478">
    <property type="entry name" value="PDZ"/>
</dbReference>
<dbReference type="InterPro" id="IPR041489">
    <property type="entry name" value="PDZ_6"/>
</dbReference>
<dbReference type="InterPro" id="IPR036034">
    <property type="entry name" value="PDZ_sf"/>
</dbReference>
<dbReference type="InterPro" id="IPR004387">
    <property type="entry name" value="Pept_M50_Zn"/>
</dbReference>
<dbReference type="InterPro" id="IPR008915">
    <property type="entry name" value="Peptidase_M50"/>
</dbReference>
<dbReference type="NCBIfam" id="TIGR00054">
    <property type="entry name" value="RIP metalloprotease RseP"/>
    <property type="match status" value="1"/>
</dbReference>
<dbReference type="PANTHER" id="PTHR42837:SF2">
    <property type="entry name" value="MEMBRANE METALLOPROTEASE ARASP2, CHLOROPLASTIC-RELATED"/>
    <property type="match status" value="1"/>
</dbReference>
<dbReference type="PANTHER" id="PTHR42837">
    <property type="entry name" value="REGULATOR OF SIGMA-E PROTEASE RSEP"/>
    <property type="match status" value="1"/>
</dbReference>
<dbReference type="Pfam" id="PF13180">
    <property type="entry name" value="PDZ_2"/>
    <property type="match status" value="1"/>
</dbReference>
<dbReference type="Pfam" id="PF17820">
    <property type="entry name" value="PDZ_6"/>
    <property type="match status" value="1"/>
</dbReference>
<dbReference type="Pfam" id="PF02163">
    <property type="entry name" value="Peptidase_M50"/>
    <property type="match status" value="1"/>
</dbReference>
<dbReference type="SMART" id="SM00228">
    <property type="entry name" value="PDZ"/>
    <property type="match status" value="2"/>
</dbReference>
<dbReference type="SUPFAM" id="SSF50156">
    <property type="entry name" value="PDZ domain-like"/>
    <property type="match status" value="2"/>
</dbReference>
<dbReference type="PROSITE" id="PS50106">
    <property type="entry name" value="PDZ"/>
    <property type="match status" value="1"/>
</dbReference>
<dbReference type="PROSITE" id="PS00142">
    <property type="entry name" value="ZINC_PROTEASE"/>
    <property type="match status" value="1"/>
</dbReference>
<organism>
    <name type="scientific">Aquifex aeolicus (strain VF5)</name>
    <dbReference type="NCBI Taxonomy" id="224324"/>
    <lineage>
        <taxon>Bacteria</taxon>
        <taxon>Pseudomonadati</taxon>
        <taxon>Aquificota</taxon>
        <taxon>Aquificia</taxon>
        <taxon>Aquificales</taxon>
        <taxon>Aquificaceae</taxon>
        <taxon>Aquifex</taxon>
    </lineage>
</organism>
<reference key="1">
    <citation type="journal article" date="1998" name="Nature">
        <title>The complete genome of the hyperthermophilic bacterium Aquifex aeolicus.</title>
        <authorList>
            <person name="Deckert G."/>
            <person name="Warren P.V."/>
            <person name="Gaasterland T."/>
            <person name="Young W.G."/>
            <person name="Lenox A.L."/>
            <person name="Graham D.E."/>
            <person name="Overbeek R."/>
            <person name="Snead M.A."/>
            <person name="Keller M."/>
            <person name="Aujay M."/>
            <person name="Huber R."/>
            <person name="Feldman R.A."/>
            <person name="Short J.M."/>
            <person name="Olsen G.J."/>
            <person name="Swanson R.V."/>
        </authorList>
    </citation>
    <scope>NUCLEOTIDE SEQUENCE [LARGE SCALE GENOMIC DNA]</scope>
    <source>
        <strain>VF5</strain>
    </source>
</reference>
<protein>
    <recommendedName>
        <fullName>Putative zinc metalloprotease aq_1964</fullName>
        <ecNumber>3.4.24.-</ecNumber>
    </recommendedName>
</protein>
<keyword id="KW-0002">3D-structure</keyword>
<keyword id="KW-0997">Cell inner membrane</keyword>
<keyword id="KW-1003">Cell membrane</keyword>
<keyword id="KW-0378">Hydrolase</keyword>
<keyword id="KW-0472">Membrane</keyword>
<keyword id="KW-0479">Metal-binding</keyword>
<keyword id="KW-0482">Metalloprotease</keyword>
<keyword id="KW-0645">Protease</keyword>
<keyword id="KW-1185">Reference proteome</keyword>
<keyword id="KW-0812">Transmembrane</keyword>
<keyword id="KW-1133">Transmembrane helix</keyword>
<keyword id="KW-0862">Zinc</keyword>
<evidence type="ECO:0000250" key="1"/>
<evidence type="ECO:0000255" key="2"/>
<evidence type="ECO:0000255" key="3">
    <source>
        <dbReference type="PROSITE-ProRule" id="PRU00143"/>
    </source>
</evidence>
<evidence type="ECO:0000255" key="4">
    <source>
        <dbReference type="PROSITE-ProRule" id="PRU10095"/>
    </source>
</evidence>
<evidence type="ECO:0000305" key="5"/>
<evidence type="ECO:0007829" key="6">
    <source>
        <dbReference type="PDB" id="3WKM"/>
    </source>
</evidence>
<evidence type="ECO:0007829" key="7">
    <source>
        <dbReference type="PDB" id="6AKQ"/>
    </source>
</evidence>
<evidence type="ECO:0007829" key="8">
    <source>
        <dbReference type="PDB" id="6AL0"/>
    </source>
</evidence>
<accession>O67776</accession>
<feature type="chain" id="PRO_0000088427" description="Putative zinc metalloprotease aq_1964">
    <location>
        <begin position="1"/>
        <end position="429"/>
    </location>
</feature>
<feature type="transmembrane region" description="Helical" evidence="2">
    <location>
        <begin position="88"/>
        <end position="110"/>
    </location>
</feature>
<feature type="transmembrane region" description="Helical" evidence="2">
    <location>
        <begin position="369"/>
        <end position="391"/>
    </location>
</feature>
<feature type="transmembrane region" description="Helical" evidence="2">
    <location>
        <begin position="406"/>
        <end position="428"/>
    </location>
</feature>
<feature type="domain" description="PDZ" evidence="3">
    <location>
        <begin position="189"/>
        <end position="265"/>
    </location>
</feature>
<feature type="active site" evidence="4">
    <location>
        <position position="18"/>
    </location>
</feature>
<feature type="binding site" evidence="4">
    <location>
        <position position="17"/>
    </location>
    <ligand>
        <name>Zn(2+)</name>
        <dbReference type="ChEBI" id="CHEBI:29105"/>
        <note>catalytic</note>
    </ligand>
</feature>
<feature type="binding site" evidence="4">
    <location>
        <position position="21"/>
    </location>
    <ligand>
        <name>Zn(2+)</name>
        <dbReference type="ChEBI" id="CHEBI:29105"/>
        <note>catalytic</note>
    </ligand>
</feature>
<feature type="helix" evidence="7">
    <location>
        <begin position="118"/>
        <end position="121"/>
    </location>
</feature>
<feature type="strand" evidence="7">
    <location>
        <begin position="127"/>
        <end position="129"/>
    </location>
</feature>
<feature type="helix" evidence="7">
    <location>
        <begin position="134"/>
        <end position="138"/>
    </location>
</feature>
<feature type="strand" evidence="7">
    <location>
        <begin position="145"/>
        <end position="148"/>
    </location>
</feature>
<feature type="helix" evidence="7">
    <location>
        <begin position="157"/>
        <end position="169"/>
    </location>
</feature>
<feature type="strand" evidence="7">
    <location>
        <begin position="174"/>
        <end position="181"/>
    </location>
</feature>
<feature type="strand" evidence="7">
    <location>
        <begin position="184"/>
        <end position="191"/>
    </location>
</feature>
<feature type="helix" evidence="7">
    <location>
        <begin position="195"/>
        <end position="197"/>
    </location>
</feature>
<feature type="strand" evidence="8">
    <location>
        <begin position="203"/>
        <end position="205"/>
    </location>
</feature>
<feature type="strand" evidence="7">
    <location>
        <begin position="210"/>
        <end position="214"/>
    </location>
</feature>
<feature type="helix" evidence="7">
    <location>
        <begin position="219"/>
        <end position="222"/>
    </location>
</feature>
<feature type="strand" evidence="7">
    <location>
        <begin position="230"/>
        <end position="234"/>
    </location>
</feature>
<feature type="helix" evidence="7">
    <location>
        <begin position="242"/>
        <end position="250"/>
    </location>
</feature>
<feature type="turn" evidence="7">
    <location>
        <begin position="251"/>
        <end position="254"/>
    </location>
</feature>
<feature type="strand" evidence="7">
    <location>
        <begin position="257"/>
        <end position="264"/>
    </location>
</feature>
<feature type="strand" evidence="7">
    <location>
        <begin position="266"/>
        <end position="272"/>
    </location>
</feature>
<feature type="strand" evidence="6">
    <location>
        <begin position="275"/>
        <end position="277"/>
    </location>
</feature>
<feature type="turn" evidence="7">
    <location>
        <begin position="278"/>
        <end position="280"/>
    </location>
</feature>
<feature type="strand" evidence="7">
    <location>
        <begin position="281"/>
        <end position="284"/>
    </location>
</feature>
<feature type="strand" evidence="7">
    <location>
        <begin position="286"/>
        <end position="289"/>
    </location>
</feature>
<sequence length="429" mass="47792">MGLIAFLILIGVLVWVHEFGHFLMAKLFRVKVEIFSIGFGPPIFRRQWGETVYQIAALPLGGYVKLYGEEENVHDPRAFSTKKPWQKILIALGGPLFNFLFTILVFALVYTAGVEVPKYLKEPVVVGYVQRDSIAQKIGIKPGDKIIKINGYEVRTWEDLRDALIRLSLDGVKETTLFLERNGEVLHLTIKVPNVQKGEELGIAPLVKPVVGGVKKGSPADQVGIKPGDLILEVNGKKINTWYELVEEVRKSQGKAIKLKILRNGKMIEKELIPAKDPKTGTYFIGLFPKTETVVEKKPFGEALASAVNRTWELTVLTLKTIAGLITGKVSFQTLGGPIAIAQIAGQAAQSGFIPYLVMMAFISLQLGIFNLIPLPILDGGLILLFAIEWLRGRPLPEKFKEYWQRVGLAIIITLTIFVFINDILRLLR</sequence>
<name>Y1964_AQUAE</name>
<comment type="cofactor">
    <cofactor evidence="5">
        <name>Zn(2+)</name>
        <dbReference type="ChEBI" id="CHEBI:29105"/>
    </cofactor>
</comment>
<comment type="subcellular location">
    <subcellularLocation>
        <location evidence="1">Cell inner membrane</location>
        <topology evidence="1">Multi-pass membrane protein</topology>
    </subcellularLocation>
</comment>
<comment type="similarity">
    <text evidence="5">Belongs to the peptidase M50B family.</text>
</comment>